<evidence type="ECO:0000255" key="1">
    <source>
        <dbReference type="HAMAP-Rule" id="MF_00528"/>
    </source>
</evidence>
<evidence type="ECO:0000269" key="2">
    <source>
    </source>
</evidence>
<evidence type="ECO:0000305" key="3"/>
<evidence type="ECO:0000305" key="4">
    <source>
    </source>
</evidence>
<organism>
    <name type="scientific">Salmonella typhimurium (strain LT2 / SGSC1412 / ATCC 700720)</name>
    <dbReference type="NCBI Taxonomy" id="99287"/>
    <lineage>
        <taxon>Bacteria</taxon>
        <taxon>Pseudomonadati</taxon>
        <taxon>Pseudomonadota</taxon>
        <taxon>Gammaproteobacteria</taxon>
        <taxon>Enterobacterales</taxon>
        <taxon>Enterobacteriaceae</taxon>
        <taxon>Salmonella</taxon>
    </lineage>
</organism>
<name>NTPPB_SALTY</name>
<protein>
    <recommendedName>
        <fullName evidence="1 3">7-methyl-GTP pyrophosphatase</fullName>
        <shortName evidence="1 3">m(7)GTP pyrophosphatase</shortName>
        <ecNumber evidence="1 2">3.6.1.-</ecNumber>
    </recommendedName>
</protein>
<dbReference type="EC" id="3.6.1.-" evidence="1 2"/>
<dbReference type="EMBL" id="AE006468">
    <property type="protein sequence ID" value="AAL20118.1"/>
    <property type="molecule type" value="Genomic_DNA"/>
</dbReference>
<dbReference type="RefSeq" id="NP_460159.1">
    <property type="nucleotide sequence ID" value="NC_003197.2"/>
</dbReference>
<dbReference type="RefSeq" id="WP_001137605.1">
    <property type="nucleotide sequence ID" value="NC_003197.2"/>
</dbReference>
<dbReference type="SMR" id="P58627"/>
<dbReference type="STRING" id="99287.STM1189"/>
<dbReference type="PaxDb" id="99287-STM1189"/>
<dbReference type="GeneID" id="1252707"/>
<dbReference type="KEGG" id="stm:STM1189"/>
<dbReference type="PATRIC" id="fig|99287.12.peg.1258"/>
<dbReference type="HOGENOM" id="CLU_040416_1_0_6"/>
<dbReference type="OMA" id="FYCAGSF"/>
<dbReference type="PhylomeDB" id="P58627"/>
<dbReference type="BioCyc" id="SENT99287:STM1189-MONOMER"/>
<dbReference type="Proteomes" id="UP000001014">
    <property type="component" value="Chromosome"/>
</dbReference>
<dbReference type="GO" id="GO:0005737">
    <property type="term" value="C:cytoplasm"/>
    <property type="evidence" value="ECO:0007669"/>
    <property type="project" value="UniProtKB-SubCell"/>
</dbReference>
<dbReference type="GO" id="GO:0047429">
    <property type="term" value="F:nucleoside triphosphate diphosphatase activity"/>
    <property type="evidence" value="ECO:0000318"/>
    <property type="project" value="GO_Central"/>
</dbReference>
<dbReference type="GO" id="GO:0009117">
    <property type="term" value="P:nucleotide metabolic process"/>
    <property type="evidence" value="ECO:0007669"/>
    <property type="project" value="UniProtKB-KW"/>
</dbReference>
<dbReference type="CDD" id="cd00555">
    <property type="entry name" value="Maf"/>
    <property type="match status" value="1"/>
</dbReference>
<dbReference type="FunFam" id="3.90.950.10:FF:000005">
    <property type="entry name" value="7-methyl-GTP pyrophosphatase"/>
    <property type="match status" value="1"/>
</dbReference>
<dbReference type="Gene3D" id="3.90.950.10">
    <property type="match status" value="1"/>
</dbReference>
<dbReference type="HAMAP" id="MF_00528">
    <property type="entry name" value="Maf"/>
    <property type="match status" value="1"/>
</dbReference>
<dbReference type="InterPro" id="IPR029001">
    <property type="entry name" value="ITPase-like_fam"/>
</dbReference>
<dbReference type="InterPro" id="IPR003697">
    <property type="entry name" value="Maf-like"/>
</dbReference>
<dbReference type="NCBIfam" id="TIGR00172">
    <property type="entry name" value="maf"/>
    <property type="match status" value="1"/>
</dbReference>
<dbReference type="PANTHER" id="PTHR43213:SF10">
    <property type="entry name" value="7-METHYL-GTP PYROPHOSPHATASE"/>
    <property type="match status" value="1"/>
</dbReference>
<dbReference type="PANTHER" id="PTHR43213">
    <property type="entry name" value="BIFUNCTIONAL DTTP/UTP PYROPHOSPHATASE/METHYLTRANSFERASE PROTEIN-RELATED"/>
    <property type="match status" value="1"/>
</dbReference>
<dbReference type="Pfam" id="PF02545">
    <property type="entry name" value="Maf"/>
    <property type="match status" value="1"/>
</dbReference>
<dbReference type="PIRSF" id="PIRSF006305">
    <property type="entry name" value="Maf"/>
    <property type="match status" value="1"/>
</dbReference>
<dbReference type="SUPFAM" id="SSF52972">
    <property type="entry name" value="ITPase-like"/>
    <property type="match status" value="1"/>
</dbReference>
<comment type="function">
    <text evidence="2">Nucleoside triphosphate pyrophosphatase that hydrolyzes 7-methyl-GTP (m(7)GTP) (PubMed:24210219). May have a dual role in cell division arrest and in preventing the incorporation of modified nucleotides into cellular nucleic acids (PubMed:24210219).</text>
</comment>
<comment type="catalytic activity">
    <reaction evidence="1 2">
        <text>N(7)-methyl-GTP + H2O = N(7)-methyl-GMP + diphosphate + H(+)</text>
        <dbReference type="Rhea" id="RHEA:58744"/>
        <dbReference type="ChEBI" id="CHEBI:15377"/>
        <dbReference type="ChEBI" id="CHEBI:15378"/>
        <dbReference type="ChEBI" id="CHEBI:33019"/>
        <dbReference type="ChEBI" id="CHEBI:58285"/>
        <dbReference type="ChEBI" id="CHEBI:87133"/>
    </reaction>
</comment>
<comment type="cofactor">
    <cofactor evidence="1">
        <name>a divalent metal cation</name>
        <dbReference type="ChEBI" id="CHEBI:60240"/>
    </cofactor>
</comment>
<comment type="biophysicochemical properties">
    <kinetics>
        <KM evidence="2">30.9 uM for m(7)GTP</KM>
        <text evidence="2">kcat is 1.5 sec(-1).</text>
    </kinetics>
</comment>
<comment type="subcellular location">
    <subcellularLocation>
        <location evidence="1 3">Cytoplasm</location>
    </subcellularLocation>
</comment>
<comment type="similarity">
    <text evidence="1 4">Belongs to the Maf family. YceF subfamily.</text>
</comment>
<accession>P58627</accession>
<proteinExistence type="evidence at protein level"/>
<sequence length="194" mass="21493">MPRLILASTSPWRRALLEKLTIPFECAAPDVDETPMPGEAPRQLVLRLAQAKAQSLAARFPNHLIIGSDQICVLDGEITGKPLTEEKARQQLAKASGNIVTFYTGLALYNSASGHLQTEVEPFDVHFRHLSEAEIDDYVRKEHPLHCAGSFKSEGLGIALFERLEGRDPNTLIGLPLIALCQMLRREGFNPLQQ</sequence>
<feature type="chain" id="PRO_0000122979" description="7-methyl-GTP pyrophosphatase">
    <location>
        <begin position="1"/>
        <end position="194"/>
    </location>
</feature>
<feature type="active site" description="Proton acceptor" evidence="1">
    <location>
        <position position="69"/>
    </location>
</feature>
<feature type="site" description="Important for substrate specificity" evidence="1 4">
    <location>
        <position position="12"/>
    </location>
</feature>
<feature type="site" description="Important for substrate specificity" evidence="1 4">
    <location>
        <position position="70"/>
    </location>
</feature>
<feature type="site" description="Important for substrate specificity" evidence="1 4">
    <location>
        <position position="154"/>
    </location>
</feature>
<keyword id="KW-0963">Cytoplasm</keyword>
<keyword id="KW-0378">Hydrolase</keyword>
<keyword id="KW-0546">Nucleotide metabolism</keyword>
<keyword id="KW-1185">Reference proteome</keyword>
<reference key="1">
    <citation type="journal article" date="2001" name="Nature">
        <title>Complete genome sequence of Salmonella enterica serovar Typhimurium LT2.</title>
        <authorList>
            <person name="McClelland M."/>
            <person name="Sanderson K.E."/>
            <person name="Spieth J."/>
            <person name="Clifton S.W."/>
            <person name="Latreille P."/>
            <person name="Courtney L."/>
            <person name="Porwollik S."/>
            <person name="Ali J."/>
            <person name="Dante M."/>
            <person name="Du F."/>
            <person name="Hou S."/>
            <person name="Layman D."/>
            <person name="Leonard S."/>
            <person name="Nguyen C."/>
            <person name="Scott K."/>
            <person name="Holmes A."/>
            <person name="Grewal N."/>
            <person name="Mulvaney E."/>
            <person name="Ryan E."/>
            <person name="Sun H."/>
            <person name="Florea L."/>
            <person name="Miller W."/>
            <person name="Stoneking T."/>
            <person name="Nhan M."/>
            <person name="Waterston R."/>
            <person name="Wilson R.K."/>
        </authorList>
    </citation>
    <scope>NUCLEOTIDE SEQUENCE [LARGE SCALE GENOMIC DNA]</scope>
    <source>
        <strain>LT2 / SGSC1412 / ATCC 700720</strain>
    </source>
</reference>
<reference key="2">
    <citation type="journal article" date="2013" name="Chem. Biol.">
        <title>Biochemical and structural studies of conserved Maf proteins revealed nucleotide pyrophosphatases with a preference for modified nucleotides.</title>
        <authorList>
            <person name="Tchigvintsev A."/>
            <person name="Tchigvintsev D."/>
            <person name="Flick R."/>
            <person name="Popovic A."/>
            <person name="Dong A."/>
            <person name="Xu X."/>
            <person name="Brown G."/>
            <person name="Lu W."/>
            <person name="Wu H."/>
            <person name="Cui H."/>
            <person name="Dombrowski L."/>
            <person name="Joo J.C."/>
            <person name="Beloglazova N."/>
            <person name="Min J."/>
            <person name="Savchenko A."/>
            <person name="Caudy A.A."/>
            <person name="Rabinowitz J.D."/>
            <person name="Murzin A.G."/>
            <person name="Yakunin A.F."/>
        </authorList>
    </citation>
    <scope>FUNCTION</scope>
    <scope>CATALYTIC ACTIVITY</scope>
    <scope>BIOPHYSICOCHEMICAL PROPERTIES</scope>
</reference>
<gene>
    <name type="primary">yceF</name>
    <name type="ordered locus">STM1189</name>
</gene>